<accession>B5XUB8</accession>
<dbReference type="EC" id="2.7.2.3" evidence="1"/>
<dbReference type="EMBL" id="CP000964">
    <property type="protein sequence ID" value="ACI10210.1"/>
    <property type="molecule type" value="Genomic_DNA"/>
</dbReference>
<dbReference type="SMR" id="B5XUB8"/>
<dbReference type="KEGG" id="kpe:KPK_0744"/>
<dbReference type="HOGENOM" id="CLU_025427_0_2_6"/>
<dbReference type="UniPathway" id="UPA00109">
    <property type="reaction ID" value="UER00185"/>
</dbReference>
<dbReference type="Proteomes" id="UP000001734">
    <property type="component" value="Chromosome"/>
</dbReference>
<dbReference type="GO" id="GO:0005829">
    <property type="term" value="C:cytosol"/>
    <property type="evidence" value="ECO:0007669"/>
    <property type="project" value="TreeGrafter"/>
</dbReference>
<dbReference type="GO" id="GO:0043531">
    <property type="term" value="F:ADP binding"/>
    <property type="evidence" value="ECO:0007669"/>
    <property type="project" value="TreeGrafter"/>
</dbReference>
<dbReference type="GO" id="GO:0005524">
    <property type="term" value="F:ATP binding"/>
    <property type="evidence" value="ECO:0007669"/>
    <property type="project" value="UniProtKB-KW"/>
</dbReference>
<dbReference type="GO" id="GO:0004618">
    <property type="term" value="F:phosphoglycerate kinase activity"/>
    <property type="evidence" value="ECO:0007669"/>
    <property type="project" value="UniProtKB-UniRule"/>
</dbReference>
<dbReference type="GO" id="GO:0006094">
    <property type="term" value="P:gluconeogenesis"/>
    <property type="evidence" value="ECO:0007669"/>
    <property type="project" value="TreeGrafter"/>
</dbReference>
<dbReference type="GO" id="GO:0006096">
    <property type="term" value="P:glycolytic process"/>
    <property type="evidence" value="ECO:0007669"/>
    <property type="project" value="UniProtKB-UniRule"/>
</dbReference>
<dbReference type="FunFam" id="3.40.50.1260:FF:000001">
    <property type="entry name" value="Phosphoglycerate kinase"/>
    <property type="match status" value="1"/>
</dbReference>
<dbReference type="FunFam" id="3.40.50.1260:FF:000002">
    <property type="entry name" value="Phosphoglycerate kinase"/>
    <property type="match status" value="1"/>
</dbReference>
<dbReference type="Gene3D" id="3.40.50.1260">
    <property type="entry name" value="Phosphoglycerate kinase, N-terminal domain"/>
    <property type="match status" value="2"/>
</dbReference>
<dbReference type="HAMAP" id="MF_00145">
    <property type="entry name" value="Phosphoglyc_kinase"/>
    <property type="match status" value="1"/>
</dbReference>
<dbReference type="InterPro" id="IPR001576">
    <property type="entry name" value="Phosphoglycerate_kinase"/>
</dbReference>
<dbReference type="InterPro" id="IPR015911">
    <property type="entry name" value="Phosphoglycerate_kinase_CS"/>
</dbReference>
<dbReference type="InterPro" id="IPR015824">
    <property type="entry name" value="Phosphoglycerate_kinase_N"/>
</dbReference>
<dbReference type="InterPro" id="IPR036043">
    <property type="entry name" value="Phosphoglycerate_kinase_sf"/>
</dbReference>
<dbReference type="PANTHER" id="PTHR11406">
    <property type="entry name" value="PHOSPHOGLYCERATE KINASE"/>
    <property type="match status" value="1"/>
</dbReference>
<dbReference type="PANTHER" id="PTHR11406:SF23">
    <property type="entry name" value="PHOSPHOGLYCERATE KINASE 1, CHLOROPLASTIC-RELATED"/>
    <property type="match status" value="1"/>
</dbReference>
<dbReference type="Pfam" id="PF00162">
    <property type="entry name" value="PGK"/>
    <property type="match status" value="1"/>
</dbReference>
<dbReference type="PIRSF" id="PIRSF000724">
    <property type="entry name" value="Pgk"/>
    <property type="match status" value="1"/>
</dbReference>
<dbReference type="PRINTS" id="PR00477">
    <property type="entry name" value="PHGLYCKINASE"/>
</dbReference>
<dbReference type="SUPFAM" id="SSF53748">
    <property type="entry name" value="Phosphoglycerate kinase"/>
    <property type="match status" value="1"/>
</dbReference>
<dbReference type="PROSITE" id="PS00111">
    <property type="entry name" value="PGLYCERATE_KINASE"/>
    <property type="match status" value="1"/>
</dbReference>
<feature type="chain" id="PRO_1000096349" description="Phosphoglycerate kinase">
    <location>
        <begin position="1"/>
        <end position="387"/>
    </location>
</feature>
<feature type="binding site" evidence="1">
    <location>
        <begin position="21"/>
        <end position="23"/>
    </location>
    <ligand>
        <name>substrate</name>
    </ligand>
</feature>
<feature type="binding site" evidence="1">
    <location>
        <position position="36"/>
    </location>
    <ligand>
        <name>substrate</name>
    </ligand>
</feature>
<feature type="binding site" evidence="1">
    <location>
        <begin position="59"/>
        <end position="62"/>
    </location>
    <ligand>
        <name>substrate</name>
    </ligand>
</feature>
<feature type="binding site" evidence="1">
    <location>
        <position position="113"/>
    </location>
    <ligand>
        <name>substrate</name>
    </ligand>
</feature>
<feature type="binding site" evidence="1">
    <location>
        <position position="146"/>
    </location>
    <ligand>
        <name>substrate</name>
    </ligand>
</feature>
<feature type="binding site" evidence="1">
    <location>
        <position position="197"/>
    </location>
    <ligand>
        <name>ATP</name>
        <dbReference type="ChEBI" id="CHEBI:30616"/>
    </ligand>
</feature>
<feature type="binding site" evidence="1">
    <location>
        <position position="314"/>
    </location>
    <ligand>
        <name>ATP</name>
        <dbReference type="ChEBI" id="CHEBI:30616"/>
    </ligand>
</feature>
<feature type="binding site" evidence="1">
    <location>
        <begin position="340"/>
        <end position="343"/>
    </location>
    <ligand>
        <name>ATP</name>
        <dbReference type="ChEBI" id="CHEBI:30616"/>
    </ligand>
</feature>
<comment type="catalytic activity">
    <reaction evidence="1">
        <text>(2R)-3-phosphoglycerate + ATP = (2R)-3-phospho-glyceroyl phosphate + ADP</text>
        <dbReference type="Rhea" id="RHEA:14801"/>
        <dbReference type="ChEBI" id="CHEBI:30616"/>
        <dbReference type="ChEBI" id="CHEBI:57604"/>
        <dbReference type="ChEBI" id="CHEBI:58272"/>
        <dbReference type="ChEBI" id="CHEBI:456216"/>
        <dbReference type="EC" id="2.7.2.3"/>
    </reaction>
</comment>
<comment type="pathway">
    <text evidence="1">Carbohydrate degradation; glycolysis; pyruvate from D-glyceraldehyde 3-phosphate: step 2/5.</text>
</comment>
<comment type="subunit">
    <text evidence="1">Monomer.</text>
</comment>
<comment type="subcellular location">
    <subcellularLocation>
        <location evidence="1">Cytoplasm</location>
    </subcellularLocation>
</comment>
<comment type="similarity">
    <text evidence="1">Belongs to the phosphoglycerate kinase family.</text>
</comment>
<proteinExistence type="inferred from homology"/>
<gene>
    <name evidence="1" type="primary">pgk</name>
    <name type="ordered locus">KPK_0744</name>
</gene>
<name>PGK_KLEP3</name>
<organism>
    <name type="scientific">Klebsiella pneumoniae (strain 342)</name>
    <dbReference type="NCBI Taxonomy" id="507522"/>
    <lineage>
        <taxon>Bacteria</taxon>
        <taxon>Pseudomonadati</taxon>
        <taxon>Pseudomonadota</taxon>
        <taxon>Gammaproteobacteria</taxon>
        <taxon>Enterobacterales</taxon>
        <taxon>Enterobacteriaceae</taxon>
        <taxon>Klebsiella/Raoultella group</taxon>
        <taxon>Klebsiella</taxon>
        <taxon>Klebsiella pneumoniae complex</taxon>
    </lineage>
</organism>
<protein>
    <recommendedName>
        <fullName evidence="1">Phosphoglycerate kinase</fullName>
        <ecNumber evidence="1">2.7.2.3</ecNumber>
    </recommendedName>
</protein>
<sequence>MSVIKMTDLDLAGKRVFIRADLNVPVKDGKVTSDARIRASLPTIELALKQGAKVMVTSHLGRPTEGEYNEEFSLLPVVNYLKDKLSNPVRLVKDYLDGVEVAAGELVVLENVRFNKGEKKDDEALSKKYAALCDVFVMDAFGTAHRAQASTHGIGKFADVACAGPLLAAELDALGKALKEPARPMVAIVGGSKVSTKLTVLDSLSKIADQLIVGGGIANTFVAAQGHNVGKSLYEADLVDEAKRLLSTCDIPVPTDVRVATEFSETATATLKSVNDIKDDEQILDLGDVSAQKLADILKNAKTILWNGPVGVFEFPNFRKGTEIVANAIADSEGFSIAGGGDTLAAIDLFGIADKISYISTGGGAFLEFVEGKVLPAVAMLEERAKQ</sequence>
<evidence type="ECO:0000255" key="1">
    <source>
        <dbReference type="HAMAP-Rule" id="MF_00145"/>
    </source>
</evidence>
<keyword id="KW-0067">ATP-binding</keyword>
<keyword id="KW-0963">Cytoplasm</keyword>
<keyword id="KW-0324">Glycolysis</keyword>
<keyword id="KW-0418">Kinase</keyword>
<keyword id="KW-0547">Nucleotide-binding</keyword>
<keyword id="KW-0808">Transferase</keyword>
<reference key="1">
    <citation type="journal article" date="2008" name="PLoS Genet.">
        <title>Complete genome sequence of the N2-fixing broad host range endophyte Klebsiella pneumoniae 342 and virulence predictions verified in mice.</title>
        <authorList>
            <person name="Fouts D.E."/>
            <person name="Tyler H.L."/>
            <person name="DeBoy R.T."/>
            <person name="Daugherty S."/>
            <person name="Ren Q."/>
            <person name="Badger J.H."/>
            <person name="Durkin A.S."/>
            <person name="Huot H."/>
            <person name="Shrivastava S."/>
            <person name="Kothari S."/>
            <person name="Dodson R.J."/>
            <person name="Mohamoud Y."/>
            <person name="Khouri H."/>
            <person name="Roesch L.F.W."/>
            <person name="Krogfelt K.A."/>
            <person name="Struve C."/>
            <person name="Triplett E.W."/>
            <person name="Methe B.A."/>
        </authorList>
    </citation>
    <scope>NUCLEOTIDE SEQUENCE [LARGE SCALE GENOMIC DNA]</scope>
    <source>
        <strain>342</strain>
    </source>
</reference>